<dbReference type="EMBL" id="X69198">
    <property type="protein sequence ID" value="CAA48944.1"/>
    <property type="molecule type" value="Genomic_DNA"/>
</dbReference>
<dbReference type="PIR" id="C36837">
    <property type="entry name" value="C36837"/>
</dbReference>
<dbReference type="RefSeq" id="NP_042047.1">
    <property type="nucleotide sequence ID" value="NC_001611.1"/>
</dbReference>
<dbReference type="SMR" id="P33861"/>
<dbReference type="GeneID" id="1486398"/>
<dbReference type="KEGG" id="vg:1486398"/>
<dbReference type="Proteomes" id="UP000002060">
    <property type="component" value="Segment"/>
</dbReference>
<dbReference type="InterPro" id="IPR005004">
    <property type="entry name" value="Poxvirus_C4/C10"/>
</dbReference>
<dbReference type="Pfam" id="PF03336">
    <property type="entry name" value="Pox_C4_C10"/>
    <property type="match status" value="1"/>
</dbReference>
<dbReference type="PIRSF" id="PIRSF003698">
    <property type="entry name" value="VAC_C10L"/>
    <property type="match status" value="1"/>
</dbReference>
<accession>P33861</accession>
<comment type="similarity">
    <text evidence="1">Belongs to the poxviridae C4/C10 protein family.</text>
</comment>
<reference key="1">
    <citation type="journal article" date="1993" name="FEBS Lett.">
        <title>Genes of variola and vaccinia viruses necessary to overcome the host protective mechanisms.</title>
        <authorList>
            <person name="Shchelkunov S.N."/>
            <person name="Blinov V.M."/>
            <person name="Sandakhchiev L.S."/>
        </authorList>
    </citation>
    <scope>NUCLEOTIDE SEQUENCE [GENOMIC DNA]</scope>
    <source>
        <strain>India-1967 / Isolate Ind3</strain>
    </source>
</reference>
<feature type="chain" id="PRO_0000099411" description="Protein C10">
    <location>
        <begin position="1"/>
        <end position="330"/>
    </location>
</feature>
<gene>
    <name type="ORF">C10L</name>
    <name type="ORF">D3L</name>
</gene>
<sequence length="330" mass="38303">MDIYNDKGLQTIKLFNNEFDCIRNDIRELFKHVTDSDSIQLPMEDNSDIIENIRKILYRRLKNVECVDIDSTITFMKYDPNDDNKRTCSNWVPLTNNYMEYCLVIYLETPICGGKIKLYHPTGNIKSDKDIMFAKTLDFKSKKVLTGRKTIAVLDISVSYNRSMTTIHYGDVDIDIHTDKNGKELCYCYITIDDHYLVNVETIGVIVNRSGKCLLVNNHLGIGIVKDKRISDSFGDVCMDTIFDFSEARELFSLTNDDNRNIAWDTDKLDDDTDIWTPVTEDDYKFLSRLVLYAKSQSDTVFDHYVLTGDTEPPTVFIFKVTRFYFNILK</sequence>
<organismHost>
    <name type="scientific">Homo sapiens</name>
    <name type="common">Human</name>
    <dbReference type="NCBI Taxonomy" id="9606"/>
</organismHost>
<proteinExistence type="inferred from homology"/>
<organism>
    <name type="scientific">Variola virus (isolate Human/India/Ind3/1967)</name>
    <name type="common">VARV</name>
    <name type="synonym">Smallpox virus</name>
    <dbReference type="NCBI Taxonomy" id="587200"/>
    <lineage>
        <taxon>Viruses</taxon>
        <taxon>Varidnaviria</taxon>
        <taxon>Bamfordvirae</taxon>
        <taxon>Nucleocytoviricota</taxon>
        <taxon>Pokkesviricetes</taxon>
        <taxon>Chitovirales</taxon>
        <taxon>Poxviridae</taxon>
        <taxon>Chordopoxvirinae</taxon>
        <taxon>Orthopoxvirus</taxon>
        <taxon>Variola virus</taxon>
    </lineage>
</organism>
<protein>
    <recommendedName>
        <fullName>Protein C10</fullName>
    </recommendedName>
</protein>
<evidence type="ECO:0000305" key="1"/>
<name>C10_VAR67</name>
<keyword id="KW-1185">Reference proteome</keyword>